<sequence>MATIIYDNETTFDALKDKTIAIMGYGSQGHAHARNLHESGLNVVVGLRKGSSSWAKAESDGLKVMTVEEAAKAADVIMILLPDEKQASVYYSQIEPSLEAGNALVFAHGFNIHYNQIVPPKDVDVFMVAPKGPGHIVRRTYTEGIGVPGLIAVYQDATGKARDLALAYAKGIGATRAGVYETTFREETETDLFGEQVDLCGGLSALIKTAFEVLVEAGYQPEMAYFETCHEVKLIVDLIYEGGLERMWHSVSNTAEYGGMTVGPRIINEESREAMYEALARIQNGEFAKEFVLEGMVNHPVLKAMERQEKEHPLEVVGKEIRANIPWLNKKIDDD</sequence>
<dbReference type="EC" id="1.1.1.86" evidence="1"/>
<dbReference type="EMBL" id="AE010299">
    <property type="protein sequence ID" value="AAM07141.1"/>
    <property type="molecule type" value="Genomic_DNA"/>
</dbReference>
<dbReference type="RefSeq" id="WP_011023690.1">
    <property type="nucleotide sequence ID" value="NC_003552.1"/>
</dbReference>
<dbReference type="SMR" id="Q8TJJ4"/>
<dbReference type="FunCoup" id="Q8TJJ4">
    <property type="interactions" value="148"/>
</dbReference>
<dbReference type="STRING" id="188937.MA_3790"/>
<dbReference type="EnsemblBacteria" id="AAM07141">
    <property type="protein sequence ID" value="AAM07141"/>
    <property type="gene ID" value="MA_3790"/>
</dbReference>
<dbReference type="GeneID" id="1475683"/>
<dbReference type="KEGG" id="mac:MA_3790"/>
<dbReference type="HOGENOM" id="CLU_033821_0_1_2"/>
<dbReference type="InParanoid" id="Q8TJJ4"/>
<dbReference type="OrthoDB" id="6064at2157"/>
<dbReference type="PhylomeDB" id="Q8TJJ4"/>
<dbReference type="UniPathway" id="UPA00047">
    <property type="reaction ID" value="UER00056"/>
</dbReference>
<dbReference type="UniPathway" id="UPA00049">
    <property type="reaction ID" value="UER00060"/>
</dbReference>
<dbReference type="Proteomes" id="UP000002487">
    <property type="component" value="Chromosome"/>
</dbReference>
<dbReference type="GO" id="GO:0004455">
    <property type="term" value="F:ketol-acid reductoisomerase activity"/>
    <property type="evidence" value="ECO:0000318"/>
    <property type="project" value="GO_Central"/>
</dbReference>
<dbReference type="GO" id="GO:0000287">
    <property type="term" value="F:magnesium ion binding"/>
    <property type="evidence" value="ECO:0007669"/>
    <property type="project" value="UniProtKB-UniRule"/>
</dbReference>
<dbReference type="GO" id="GO:0050661">
    <property type="term" value="F:NADP binding"/>
    <property type="evidence" value="ECO:0007669"/>
    <property type="project" value="InterPro"/>
</dbReference>
<dbReference type="GO" id="GO:0009097">
    <property type="term" value="P:isoleucine biosynthetic process"/>
    <property type="evidence" value="ECO:0000318"/>
    <property type="project" value="GO_Central"/>
</dbReference>
<dbReference type="GO" id="GO:0009099">
    <property type="term" value="P:L-valine biosynthetic process"/>
    <property type="evidence" value="ECO:0000318"/>
    <property type="project" value="GO_Central"/>
</dbReference>
<dbReference type="FunFam" id="3.40.50.720:FF:000023">
    <property type="entry name" value="Ketol-acid reductoisomerase (NADP(+))"/>
    <property type="match status" value="1"/>
</dbReference>
<dbReference type="Gene3D" id="6.10.240.10">
    <property type="match status" value="1"/>
</dbReference>
<dbReference type="Gene3D" id="3.40.50.720">
    <property type="entry name" value="NAD(P)-binding Rossmann-like Domain"/>
    <property type="match status" value="1"/>
</dbReference>
<dbReference type="HAMAP" id="MF_00435">
    <property type="entry name" value="IlvC"/>
    <property type="match status" value="1"/>
</dbReference>
<dbReference type="InterPro" id="IPR008927">
    <property type="entry name" value="6-PGluconate_DH-like_C_sf"/>
</dbReference>
<dbReference type="InterPro" id="IPR013023">
    <property type="entry name" value="KARI"/>
</dbReference>
<dbReference type="InterPro" id="IPR000506">
    <property type="entry name" value="KARI_C"/>
</dbReference>
<dbReference type="InterPro" id="IPR013116">
    <property type="entry name" value="KARI_N"/>
</dbReference>
<dbReference type="InterPro" id="IPR014359">
    <property type="entry name" value="KARI_prok"/>
</dbReference>
<dbReference type="InterPro" id="IPR036291">
    <property type="entry name" value="NAD(P)-bd_dom_sf"/>
</dbReference>
<dbReference type="NCBIfam" id="TIGR00465">
    <property type="entry name" value="ilvC"/>
    <property type="match status" value="1"/>
</dbReference>
<dbReference type="NCBIfam" id="NF004017">
    <property type="entry name" value="PRK05479.1"/>
    <property type="match status" value="1"/>
</dbReference>
<dbReference type="NCBIfam" id="NF009940">
    <property type="entry name" value="PRK13403.1"/>
    <property type="match status" value="1"/>
</dbReference>
<dbReference type="PANTHER" id="PTHR21371">
    <property type="entry name" value="KETOL-ACID REDUCTOISOMERASE, MITOCHONDRIAL"/>
    <property type="match status" value="1"/>
</dbReference>
<dbReference type="PANTHER" id="PTHR21371:SF1">
    <property type="entry name" value="KETOL-ACID REDUCTOISOMERASE, MITOCHONDRIAL"/>
    <property type="match status" value="1"/>
</dbReference>
<dbReference type="Pfam" id="PF01450">
    <property type="entry name" value="KARI_C"/>
    <property type="match status" value="1"/>
</dbReference>
<dbReference type="Pfam" id="PF07991">
    <property type="entry name" value="KARI_N"/>
    <property type="match status" value="1"/>
</dbReference>
<dbReference type="PIRSF" id="PIRSF000116">
    <property type="entry name" value="IlvC_gammaproteo"/>
    <property type="match status" value="1"/>
</dbReference>
<dbReference type="SUPFAM" id="SSF48179">
    <property type="entry name" value="6-phosphogluconate dehydrogenase C-terminal domain-like"/>
    <property type="match status" value="1"/>
</dbReference>
<dbReference type="SUPFAM" id="SSF51735">
    <property type="entry name" value="NAD(P)-binding Rossmann-fold domains"/>
    <property type="match status" value="1"/>
</dbReference>
<dbReference type="PROSITE" id="PS51851">
    <property type="entry name" value="KARI_C"/>
    <property type="match status" value="1"/>
</dbReference>
<dbReference type="PROSITE" id="PS51850">
    <property type="entry name" value="KARI_N"/>
    <property type="match status" value="1"/>
</dbReference>
<gene>
    <name evidence="1" type="primary">ilvC</name>
    <name type="ordered locus">MA_3790</name>
</gene>
<organism>
    <name type="scientific">Methanosarcina acetivorans (strain ATCC 35395 / DSM 2834 / JCM 12185 / C2A)</name>
    <dbReference type="NCBI Taxonomy" id="188937"/>
    <lineage>
        <taxon>Archaea</taxon>
        <taxon>Methanobacteriati</taxon>
        <taxon>Methanobacteriota</taxon>
        <taxon>Stenosarchaea group</taxon>
        <taxon>Methanomicrobia</taxon>
        <taxon>Methanosarcinales</taxon>
        <taxon>Methanosarcinaceae</taxon>
        <taxon>Methanosarcina</taxon>
    </lineage>
</organism>
<evidence type="ECO:0000255" key="1">
    <source>
        <dbReference type="HAMAP-Rule" id="MF_00435"/>
    </source>
</evidence>
<evidence type="ECO:0000255" key="2">
    <source>
        <dbReference type="PROSITE-ProRule" id="PRU01197"/>
    </source>
</evidence>
<evidence type="ECO:0000255" key="3">
    <source>
        <dbReference type="PROSITE-ProRule" id="PRU01198"/>
    </source>
</evidence>
<accession>Q8TJJ4</accession>
<protein>
    <recommendedName>
        <fullName evidence="1">Ketol-acid reductoisomerase (NADP(+))</fullName>
        <shortName evidence="1">KARI</shortName>
        <ecNumber evidence="1">1.1.1.86</ecNumber>
    </recommendedName>
    <alternativeName>
        <fullName evidence="1">Acetohydroxy-acid isomeroreductase</fullName>
        <shortName evidence="1">AHIR</shortName>
    </alternativeName>
    <alternativeName>
        <fullName evidence="1">Alpha-keto-beta-hydroxylacyl reductoisomerase</fullName>
    </alternativeName>
    <alternativeName>
        <fullName evidence="1">Ketol-acid reductoisomerase type 1</fullName>
    </alternativeName>
    <alternativeName>
        <fullName evidence="1">Ketol-acid reductoisomerase type I</fullName>
    </alternativeName>
</protein>
<feature type="chain" id="PRO_0000151390" description="Ketol-acid reductoisomerase (NADP(+))">
    <location>
        <begin position="1"/>
        <end position="335"/>
    </location>
</feature>
<feature type="domain" description="KARI N-terminal Rossmann" evidence="2">
    <location>
        <begin position="1"/>
        <end position="182"/>
    </location>
</feature>
<feature type="domain" description="KARI C-terminal knotted" evidence="3">
    <location>
        <begin position="183"/>
        <end position="328"/>
    </location>
</feature>
<feature type="active site" evidence="1">
    <location>
        <position position="108"/>
    </location>
</feature>
<feature type="binding site" evidence="1">
    <location>
        <begin position="25"/>
        <end position="28"/>
    </location>
    <ligand>
        <name>NADP(+)</name>
        <dbReference type="ChEBI" id="CHEBI:58349"/>
    </ligand>
</feature>
<feature type="binding site" evidence="1">
    <location>
        <position position="48"/>
    </location>
    <ligand>
        <name>NADP(+)</name>
        <dbReference type="ChEBI" id="CHEBI:58349"/>
    </ligand>
</feature>
<feature type="binding site" evidence="1">
    <location>
        <position position="51"/>
    </location>
    <ligand>
        <name>NADP(+)</name>
        <dbReference type="ChEBI" id="CHEBI:58349"/>
    </ligand>
</feature>
<feature type="binding site" evidence="1">
    <location>
        <position position="53"/>
    </location>
    <ligand>
        <name>NADP(+)</name>
        <dbReference type="ChEBI" id="CHEBI:58349"/>
    </ligand>
</feature>
<feature type="binding site" evidence="1">
    <location>
        <begin position="83"/>
        <end position="86"/>
    </location>
    <ligand>
        <name>NADP(+)</name>
        <dbReference type="ChEBI" id="CHEBI:58349"/>
    </ligand>
</feature>
<feature type="binding site" evidence="1">
    <location>
        <position position="134"/>
    </location>
    <ligand>
        <name>NADP(+)</name>
        <dbReference type="ChEBI" id="CHEBI:58349"/>
    </ligand>
</feature>
<feature type="binding site" evidence="1">
    <location>
        <position position="191"/>
    </location>
    <ligand>
        <name>Mg(2+)</name>
        <dbReference type="ChEBI" id="CHEBI:18420"/>
        <label>1</label>
    </ligand>
</feature>
<feature type="binding site" evidence="1">
    <location>
        <position position="191"/>
    </location>
    <ligand>
        <name>Mg(2+)</name>
        <dbReference type="ChEBI" id="CHEBI:18420"/>
        <label>2</label>
    </ligand>
</feature>
<feature type="binding site" evidence="1">
    <location>
        <position position="195"/>
    </location>
    <ligand>
        <name>Mg(2+)</name>
        <dbReference type="ChEBI" id="CHEBI:18420"/>
        <label>1</label>
    </ligand>
</feature>
<feature type="binding site" evidence="1">
    <location>
        <position position="227"/>
    </location>
    <ligand>
        <name>Mg(2+)</name>
        <dbReference type="ChEBI" id="CHEBI:18420"/>
        <label>2</label>
    </ligand>
</feature>
<feature type="binding site" evidence="1">
    <location>
        <position position="231"/>
    </location>
    <ligand>
        <name>Mg(2+)</name>
        <dbReference type="ChEBI" id="CHEBI:18420"/>
        <label>2</label>
    </ligand>
</feature>
<feature type="binding site" evidence="1">
    <location>
        <position position="252"/>
    </location>
    <ligand>
        <name>substrate</name>
    </ligand>
</feature>
<name>ILVC_METAC</name>
<reference key="1">
    <citation type="journal article" date="2002" name="Genome Res.">
        <title>The genome of Methanosarcina acetivorans reveals extensive metabolic and physiological diversity.</title>
        <authorList>
            <person name="Galagan J.E."/>
            <person name="Nusbaum C."/>
            <person name="Roy A."/>
            <person name="Endrizzi M.G."/>
            <person name="Macdonald P."/>
            <person name="FitzHugh W."/>
            <person name="Calvo S."/>
            <person name="Engels R."/>
            <person name="Smirnov S."/>
            <person name="Atnoor D."/>
            <person name="Brown A."/>
            <person name="Allen N."/>
            <person name="Naylor J."/>
            <person name="Stange-Thomann N."/>
            <person name="DeArellano K."/>
            <person name="Johnson R."/>
            <person name="Linton L."/>
            <person name="McEwan P."/>
            <person name="McKernan K."/>
            <person name="Talamas J."/>
            <person name="Tirrell A."/>
            <person name="Ye W."/>
            <person name="Zimmer A."/>
            <person name="Barber R.D."/>
            <person name="Cann I."/>
            <person name="Graham D.E."/>
            <person name="Grahame D.A."/>
            <person name="Guss A.M."/>
            <person name="Hedderich R."/>
            <person name="Ingram-Smith C."/>
            <person name="Kuettner H.C."/>
            <person name="Krzycki J.A."/>
            <person name="Leigh J.A."/>
            <person name="Li W."/>
            <person name="Liu J."/>
            <person name="Mukhopadhyay B."/>
            <person name="Reeve J.N."/>
            <person name="Smith K."/>
            <person name="Springer T.A."/>
            <person name="Umayam L.A."/>
            <person name="White O."/>
            <person name="White R.H."/>
            <person name="de Macario E.C."/>
            <person name="Ferry J.G."/>
            <person name="Jarrell K.F."/>
            <person name="Jing H."/>
            <person name="Macario A.J.L."/>
            <person name="Paulsen I.T."/>
            <person name="Pritchett M."/>
            <person name="Sowers K.R."/>
            <person name="Swanson R.V."/>
            <person name="Zinder S.H."/>
            <person name="Lander E."/>
            <person name="Metcalf W.W."/>
            <person name="Birren B."/>
        </authorList>
    </citation>
    <scope>NUCLEOTIDE SEQUENCE [LARGE SCALE GENOMIC DNA]</scope>
    <source>
        <strain>ATCC 35395 / DSM 2834 / JCM 12185 / C2A</strain>
    </source>
</reference>
<proteinExistence type="inferred from homology"/>
<keyword id="KW-0028">Amino-acid biosynthesis</keyword>
<keyword id="KW-0100">Branched-chain amino acid biosynthesis</keyword>
<keyword id="KW-0460">Magnesium</keyword>
<keyword id="KW-0479">Metal-binding</keyword>
<keyword id="KW-0521">NADP</keyword>
<keyword id="KW-0560">Oxidoreductase</keyword>
<keyword id="KW-1185">Reference proteome</keyword>
<comment type="function">
    <text evidence="1">Involved in the biosynthesis of branched-chain amino acids (BCAA). Catalyzes an alkyl-migration followed by a ketol-acid reduction of (S)-2-acetolactate (S2AL) to yield (R)-2,3-dihydroxy-isovalerate. In the isomerase reaction, S2AL is rearranged via a Mg-dependent methyl migration to produce 3-hydroxy-3-methyl-2-ketobutyrate (HMKB). In the reductase reaction, this 2-ketoacid undergoes a metal-dependent reduction by NADPH to yield (R)-2,3-dihydroxy-isovalerate.</text>
</comment>
<comment type="catalytic activity">
    <reaction evidence="1">
        <text>(2R)-2,3-dihydroxy-3-methylbutanoate + NADP(+) = (2S)-2-acetolactate + NADPH + H(+)</text>
        <dbReference type="Rhea" id="RHEA:22068"/>
        <dbReference type="ChEBI" id="CHEBI:15378"/>
        <dbReference type="ChEBI" id="CHEBI:49072"/>
        <dbReference type="ChEBI" id="CHEBI:57783"/>
        <dbReference type="ChEBI" id="CHEBI:58349"/>
        <dbReference type="ChEBI" id="CHEBI:58476"/>
        <dbReference type="EC" id="1.1.1.86"/>
    </reaction>
</comment>
<comment type="catalytic activity">
    <reaction evidence="1">
        <text>(2R,3R)-2,3-dihydroxy-3-methylpentanoate + NADP(+) = (S)-2-ethyl-2-hydroxy-3-oxobutanoate + NADPH + H(+)</text>
        <dbReference type="Rhea" id="RHEA:13493"/>
        <dbReference type="ChEBI" id="CHEBI:15378"/>
        <dbReference type="ChEBI" id="CHEBI:49256"/>
        <dbReference type="ChEBI" id="CHEBI:49258"/>
        <dbReference type="ChEBI" id="CHEBI:57783"/>
        <dbReference type="ChEBI" id="CHEBI:58349"/>
        <dbReference type="EC" id="1.1.1.86"/>
    </reaction>
</comment>
<comment type="cofactor">
    <cofactor evidence="1">
        <name>Mg(2+)</name>
        <dbReference type="ChEBI" id="CHEBI:18420"/>
    </cofactor>
    <text evidence="1">Binds 2 magnesium ions per subunit.</text>
</comment>
<comment type="pathway">
    <text evidence="1">Amino-acid biosynthesis; L-isoleucine biosynthesis; L-isoleucine from 2-oxobutanoate: step 2/4.</text>
</comment>
<comment type="pathway">
    <text evidence="1">Amino-acid biosynthesis; L-valine biosynthesis; L-valine from pyruvate: step 2/4.</text>
</comment>
<comment type="similarity">
    <text evidence="1">Belongs to the ketol-acid reductoisomerase family.</text>
</comment>